<accession>B5Y0T5</accession>
<feature type="chain" id="PRO_1000186607" description="7-cyano-7-deazaguanine synthase">
    <location>
        <begin position="1"/>
        <end position="233"/>
    </location>
</feature>
<feature type="binding site" evidence="1">
    <location>
        <begin position="8"/>
        <end position="18"/>
    </location>
    <ligand>
        <name>ATP</name>
        <dbReference type="ChEBI" id="CHEBI:30616"/>
    </ligand>
</feature>
<feature type="binding site" evidence="1">
    <location>
        <position position="188"/>
    </location>
    <ligand>
        <name>Zn(2+)</name>
        <dbReference type="ChEBI" id="CHEBI:29105"/>
    </ligand>
</feature>
<feature type="binding site" evidence="1">
    <location>
        <position position="197"/>
    </location>
    <ligand>
        <name>Zn(2+)</name>
        <dbReference type="ChEBI" id="CHEBI:29105"/>
    </ligand>
</feature>
<feature type="binding site" evidence="1">
    <location>
        <position position="200"/>
    </location>
    <ligand>
        <name>Zn(2+)</name>
        <dbReference type="ChEBI" id="CHEBI:29105"/>
    </ligand>
</feature>
<feature type="binding site" evidence="1">
    <location>
        <position position="203"/>
    </location>
    <ligand>
        <name>Zn(2+)</name>
        <dbReference type="ChEBI" id="CHEBI:29105"/>
    </ligand>
</feature>
<evidence type="ECO:0000255" key="1">
    <source>
        <dbReference type="HAMAP-Rule" id="MF_01633"/>
    </source>
</evidence>
<reference key="1">
    <citation type="journal article" date="2008" name="PLoS Genet.">
        <title>Complete genome sequence of the N2-fixing broad host range endophyte Klebsiella pneumoniae 342 and virulence predictions verified in mice.</title>
        <authorList>
            <person name="Fouts D.E."/>
            <person name="Tyler H.L."/>
            <person name="DeBoy R.T."/>
            <person name="Daugherty S."/>
            <person name="Ren Q."/>
            <person name="Badger J.H."/>
            <person name="Durkin A.S."/>
            <person name="Huot H."/>
            <person name="Shrivastava S."/>
            <person name="Kothari S."/>
            <person name="Dodson R.J."/>
            <person name="Mohamoud Y."/>
            <person name="Khouri H."/>
            <person name="Roesch L.F.W."/>
            <person name="Krogfelt K.A."/>
            <person name="Struve C."/>
            <person name="Triplett E.W."/>
            <person name="Methe B.A."/>
        </authorList>
    </citation>
    <scope>NUCLEOTIDE SEQUENCE [LARGE SCALE GENOMIC DNA]</scope>
    <source>
        <strain>342</strain>
    </source>
</reference>
<keyword id="KW-0067">ATP-binding</keyword>
<keyword id="KW-0436">Ligase</keyword>
<keyword id="KW-0479">Metal-binding</keyword>
<keyword id="KW-0547">Nucleotide-binding</keyword>
<keyword id="KW-0671">Queuosine biosynthesis</keyword>
<keyword id="KW-0862">Zinc</keyword>
<sequence length="233" mass="25604">MKRAVVVFSGGQDSTTCLVQALQQYDEVHCVTFDYGQRHRAEIDVARELALKLGAVAHKVLDVTLLNELAVSSLTRDNIPVPDYQPDAEGIPNTFVPGRNILFLTLTAIYAYQVKAEAIITGVCETDFSGYPDCRDEFVKALHHAVSLGMAKDIRFETPLMWLNKAETWALADFWGQLDLVRQETLTCYNGIKGDGCGQCAACNLRANGLNQYLGDKVGVMAVMKQKTGLAQA</sequence>
<organism>
    <name type="scientific">Klebsiella pneumoniae (strain 342)</name>
    <dbReference type="NCBI Taxonomy" id="507522"/>
    <lineage>
        <taxon>Bacteria</taxon>
        <taxon>Pseudomonadati</taxon>
        <taxon>Pseudomonadota</taxon>
        <taxon>Gammaproteobacteria</taxon>
        <taxon>Enterobacterales</taxon>
        <taxon>Enterobacteriaceae</taxon>
        <taxon>Klebsiella/Raoultella group</taxon>
        <taxon>Klebsiella</taxon>
        <taxon>Klebsiella pneumoniae complex</taxon>
    </lineage>
</organism>
<gene>
    <name evidence="1" type="primary">queC</name>
    <name type="ordered locus">KPK_4276</name>
</gene>
<protein>
    <recommendedName>
        <fullName evidence="1">7-cyano-7-deazaguanine synthase</fullName>
        <ecNumber evidence="1">6.3.4.20</ecNumber>
    </recommendedName>
    <alternativeName>
        <fullName evidence="1">7-cyano-7-carbaguanine synthase</fullName>
    </alternativeName>
    <alternativeName>
        <fullName evidence="1">PreQ(0) synthase</fullName>
    </alternativeName>
    <alternativeName>
        <fullName evidence="1">Queuosine biosynthesis protein QueC</fullName>
    </alternativeName>
</protein>
<name>QUEC_KLEP3</name>
<proteinExistence type="inferred from homology"/>
<dbReference type="EC" id="6.3.4.20" evidence="1"/>
<dbReference type="EMBL" id="CP000964">
    <property type="protein sequence ID" value="ACI08678.1"/>
    <property type="molecule type" value="Genomic_DNA"/>
</dbReference>
<dbReference type="SMR" id="B5Y0T5"/>
<dbReference type="KEGG" id="kpe:KPK_4276"/>
<dbReference type="HOGENOM" id="CLU_081854_0_0_6"/>
<dbReference type="UniPathway" id="UPA00391"/>
<dbReference type="Proteomes" id="UP000001734">
    <property type="component" value="Chromosome"/>
</dbReference>
<dbReference type="GO" id="GO:0005524">
    <property type="term" value="F:ATP binding"/>
    <property type="evidence" value="ECO:0007669"/>
    <property type="project" value="UniProtKB-UniRule"/>
</dbReference>
<dbReference type="GO" id="GO:0016879">
    <property type="term" value="F:ligase activity, forming carbon-nitrogen bonds"/>
    <property type="evidence" value="ECO:0007669"/>
    <property type="project" value="UniProtKB-UniRule"/>
</dbReference>
<dbReference type="GO" id="GO:0008270">
    <property type="term" value="F:zinc ion binding"/>
    <property type="evidence" value="ECO:0007669"/>
    <property type="project" value="UniProtKB-UniRule"/>
</dbReference>
<dbReference type="GO" id="GO:0008616">
    <property type="term" value="P:queuosine biosynthetic process"/>
    <property type="evidence" value="ECO:0007669"/>
    <property type="project" value="UniProtKB-UniRule"/>
</dbReference>
<dbReference type="CDD" id="cd01995">
    <property type="entry name" value="QueC-like"/>
    <property type="match status" value="1"/>
</dbReference>
<dbReference type="FunFam" id="3.40.50.620:FF:000017">
    <property type="entry name" value="7-cyano-7-deazaguanine synthase"/>
    <property type="match status" value="1"/>
</dbReference>
<dbReference type="Gene3D" id="3.40.50.620">
    <property type="entry name" value="HUPs"/>
    <property type="match status" value="1"/>
</dbReference>
<dbReference type="HAMAP" id="MF_01633">
    <property type="entry name" value="QueC"/>
    <property type="match status" value="1"/>
</dbReference>
<dbReference type="InterPro" id="IPR018317">
    <property type="entry name" value="QueC"/>
</dbReference>
<dbReference type="InterPro" id="IPR014729">
    <property type="entry name" value="Rossmann-like_a/b/a_fold"/>
</dbReference>
<dbReference type="NCBIfam" id="TIGR00364">
    <property type="entry name" value="7-cyano-7-deazaguanine synthase QueC"/>
    <property type="match status" value="1"/>
</dbReference>
<dbReference type="NCBIfam" id="NF008317">
    <property type="entry name" value="PRK11106.1"/>
    <property type="match status" value="1"/>
</dbReference>
<dbReference type="PANTHER" id="PTHR42914">
    <property type="entry name" value="7-CYANO-7-DEAZAGUANINE SYNTHASE"/>
    <property type="match status" value="1"/>
</dbReference>
<dbReference type="PANTHER" id="PTHR42914:SF1">
    <property type="entry name" value="7-CYANO-7-DEAZAGUANINE SYNTHASE"/>
    <property type="match status" value="1"/>
</dbReference>
<dbReference type="Pfam" id="PF06508">
    <property type="entry name" value="QueC"/>
    <property type="match status" value="1"/>
</dbReference>
<dbReference type="PIRSF" id="PIRSF006293">
    <property type="entry name" value="ExsB"/>
    <property type="match status" value="1"/>
</dbReference>
<dbReference type="SUPFAM" id="SSF52402">
    <property type="entry name" value="Adenine nucleotide alpha hydrolases-like"/>
    <property type="match status" value="1"/>
</dbReference>
<comment type="function">
    <text evidence="1">Catalyzes the ATP-dependent conversion of 7-carboxy-7-deazaguanine (CDG) to 7-cyano-7-deazaguanine (preQ(0)).</text>
</comment>
<comment type="catalytic activity">
    <reaction evidence="1">
        <text>7-carboxy-7-deazaguanine + NH4(+) + ATP = 7-cyano-7-deazaguanine + ADP + phosphate + H2O + H(+)</text>
        <dbReference type="Rhea" id="RHEA:27982"/>
        <dbReference type="ChEBI" id="CHEBI:15377"/>
        <dbReference type="ChEBI" id="CHEBI:15378"/>
        <dbReference type="ChEBI" id="CHEBI:28938"/>
        <dbReference type="ChEBI" id="CHEBI:30616"/>
        <dbReference type="ChEBI" id="CHEBI:43474"/>
        <dbReference type="ChEBI" id="CHEBI:45075"/>
        <dbReference type="ChEBI" id="CHEBI:61036"/>
        <dbReference type="ChEBI" id="CHEBI:456216"/>
        <dbReference type="EC" id="6.3.4.20"/>
    </reaction>
</comment>
<comment type="cofactor">
    <cofactor evidence="1">
        <name>Zn(2+)</name>
        <dbReference type="ChEBI" id="CHEBI:29105"/>
    </cofactor>
    <text evidence="1">Binds 1 zinc ion per subunit.</text>
</comment>
<comment type="pathway">
    <text evidence="1">Purine metabolism; 7-cyano-7-deazaguanine biosynthesis.</text>
</comment>
<comment type="similarity">
    <text evidence="1">Belongs to the QueC family.</text>
</comment>